<comment type="function">
    <text evidence="1">Catalyzes the NADPH-dependent reduction of L-glutamate 5-phosphate into L-glutamate 5-semialdehyde and phosphate. The product spontaneously undergoes cyclization to form 1-pyrroline-5-carboxylate.</text>
</comment>
<comment type="catalytic activity">
    <reaction evidence="1">
        <text>L-glutamate 5-semialdehyde + phosphate + NADP(+) = L-glutamyl 5-phosphate + NADPH + H(+)</text>
        <dbReference type="Rhea" id="RHEA:19541"/>
        <dbReference type="ChEBI" id="CHEBI:15378"/>
        <dbReference type="ChEBI" id="CHEBI:43474"/>
        <dbReference type="ChEBI" id="CHEBI:57783"/>
        <dbReference type="ChEBI" id="CHEBI:58066"/>
        <dbReference type="ChEBI" id="CHEBI:58274"/>
        <dbReference type="ChEBI" id="CHEBI:58349"/>
        <dbReference type="EC" id="1.2.1.41"/>
    </reaction>
</comment>
<comment type="pathway">
    <text evidence="1">Amino-acid biosynthesis; L-proline biosynthesis; L-glutamate 5-semialdehyde from L-glutamate: step 2/2.</text>
</comment>
<comment type="subcellular location">
    <subcellularLocation>
        <location evidence="1">Cytoplasm</location>
    </subcellularLocation>
</comment>
<comment type="similarity">
    <text evidence="1">Belongs to the gamma-glutamyl phosphate reductase family.</text>
</comment>
<gene>
    <name evidence="1" type="primary">proA</name>
    <name type="ordered locus">Glov_3598</name>
</gene>
<accession>B3E3M7</accession>
<reference key="1">
    <citation type="submission" date="2008-05" db="EMBL/GenBank/DDBJ databases">
        <title>Complete sequence of chromosome of Geobacter lovleyi SZ.</title>
        <authorList>
            <consortium name="US DOE Joint Genome Institute"/>
            <person name="Lucas S."/>
            <person name="Copeland A."/>
            <person name="Lapidus A."/>
            <person name="Glavina del Rio T."/>
            <person name="Dalin E."/>
            <person name="Tice H."/>
            <person name="Bruce D."/>
            <person name="Goodwin L."/>
            <person name="Pitluck S."/>
            <person name="Chertkov O."/>
            <person name="Meincke L."/>
            <person name="Brettin T."/>
            <person name="Detter J.C."/>
            <person name="Han C."/>
            <person name="Tapia R."/>
            <person name="Kuske C.R."/>
            <person name="Schmutz J."/>
            <person name="Larimer F."/>
            <person name="Land M."/>
            <person name="Hauser L."/>
            <person name="Kyrpides N."/>
            <person name="Mikhailova N."/>
            <person name="Sung Y."/>
            <person name="Fletcher K.E."/>
            <person name="Ritalahti K.M."/>
            <person name="Loeffler F.E."/>
            <person name="Richardson P."/>
        </authorList>
    </citation>
    <scope>NUCLEOTIDE SEQUENCE [LARGE SCALE GENOMIC DNA]</scope>
    <source>
        <strain>ATCC BAA-1151 / DSM 17278 / SZ</strain>
    </source>
</reference>
<organism>
    <name type="scientific">Trichlorobacter lovleyi (strain ATCC BAA-1151 / DSM 17278 / SZ)</name>
    <name type="common">Geobacter lovleyi</name>
    <dbReference type="NCBI Taxonomy" id="398767"/>
    <lineage>
        <taxon>Bacteria</taxon>
        <taxon>Pseudomonadati</taxon>
        <taxon>Thermodesulfobacteriota</taxon>
        <taxon>Desulfuromonadia</taxon>
        <taxon>Geobacterales</taxon>
        <taxon>Geobacteraceae</taxon>
        <taxon>Trichlorobacter</taxon>
    </lineage>
</organism>
<feature type="chain" id="PRO_1000123810" description="Gamma-glutamyl phosphate reductase">
    <location>
        <begin position="1"/>
        <end position="418"/>
    </location>
</feature>
<sequence length="418" mass="45248">MTIAEQVATIAKNARQASIALARLSTTVKNEMLLKMADALEAGTTGLMCENAKDLAAGKEKGLSDAMLDRLMLDAKRIKGMADALREVASLADPVGEVTRMWKRPNGLMVGKMRIPLGVIGIVYESRPNVTADAAALCLKSGNAVVLRGGSEAIHSNRAIAATLQGVMKELGIPEAALSLIPFTEREGVLEMLKQEELIDLIIPRGGESLIRFVVENSRIPVIKHYKGVCHLFVDASADFEMATRIIINAKTQRPGVCNALETLLIHKDVAATFIPPFAKSLGELQVELRGDEEFRKYAPAAKVATEEDWAAEYLELILACKVVDDMDAAIDHINQYGSLHSEVIVTRDYANAQRFIREVNSSCVLVNASTRFNDGGQLGLGAEIGISTTKLHSFGPMGLEDLTTTKFIVYGDGQVRA</sequence>
<name>PROA_TRIL1</name>
<keyword id="KW-0028">Amino-acid biosynthesis</keyword>
<keyword id="KW-0963">Cytoplasm</keyword>
<keyword id="KW-0521">NADP</keyword>
<keyword id="KW-0560">Oxidoreductase</keyword>
<keyword id="KW-0641">Proline biosynthesis</keyword>
<keyword id="KW-1185">Reference proteome</keyword>
<proteinExistence type="inferred from homology"/>
<dbReference type="EC" id="1.2.1.41" evidence="1"/>
<dbReference type="EMBL" id="CP001089">
    <property type="protein sequence ID" value="ACD97299.1"/>
    <property type="molecule type" value="Genomic_DNA"/>
</dbReference>
<dbReference type="RefSeq" id="WP_012471617.1">
    <property type="nucleotide sequence ID" value="NC_010814.1"/>
</dbReference>
<dbReference type="SMR" id="B3E3M7"/>
<dbReference type="STRING" id="398767.Glov_3598"/>
<dbReference type="KEGG" id="glo:Glov_3598"/>
<dbReference type="eggNOG" id="COG0014">
    <property type="taxonomic scope" value="Bacteria"/>
</dbReference>
<dbReference type="HOGENOM" id="CLU_030231_0_0_7"/>
<dbReference type="OrthoDB" id="9809970at2"/>
<dbReference type="UniPathway" id="UPA00098">
    <property type="reaction ID" value="UER00360"/>
</dbReference>
<dbReference type="Proteomes" id="UP000002420">
    <property type="component" value="Chromosome"/>
</dbReference>
<dbReference type="GO" id="GO:0005737">
    <property type="term" value="C:cytoplasm"/>
    <property type="evidence" value="ECO:0007669"/>
    <property type="project" value="UniProtKB-SubCell"/>
</dbReference>
<dbReference type="GO" id="GO:0004350">
    <property type="term" value="F:glutamate-5-semialdehyde dehydrogenase activity"/>
    <property type="evidence" value="ECO:0007669"/>
    <property type="project" value="UniProtKB-UniRule"/>
</dbReference>
<dbReference type="GO" id="GO:0050661">
    <property type="term" value="F:NADP binding"/>
    <property type="evidence" value="ECO:0007669"/>
    <property type="project" value="InterPro"/>
</dbReference>
<dbReference type="GO" id="GO:0055129">
    <property type="term" value="P:L-proline biosynthetic process"/>
    <property type="evidence" value="ECO:0007669"/>
    <property type="project" value="UniProtKB-UniRule"/>
</dbReference>
<dbReference type="CDD" id="cd07079">
    <property type="entry name" value="ALDH_F18-19_ProA-GPR"/>
    <property type="match status" value="1"/>
</dbReference>
<dbReference type="FunFam" id="3.40.309.10:FF:000006">
    <property type="entry name" value="Gamma-glutamyl phosphate reductase"/>
    <property type="match status" value="1"/>
</dbReference>
<dbReference type="Gene3D" id="3.40.605.10">
    <property type="entry name" value="Aldehyde Dehydrogenase, Chain A, domain 1"/>
    <property type="match status" value="1"/>
</dbReference>
<dbReference type="Gene3D" id="3.40.309.10">
    <property type="entry name" value="Aldehyde Dehydrogenase, Chain A, domain 2"/>
    <property type="match status" value="1"/>
</dbReference>
<dbReference type="HAMAP" id="MF_00412">
    <property type="entry name" value="ProA"/>
    <property type="match status" value="1"/>
</dbReference>
<dbReference type="InterPro" id="IPR016161">
    <property type="entry name" value="Ald_DH/histidinol_DH"/>
</dbReference>
<dbReference type="InterPro" id="IPR016163">
    <property type="entry name" value="Ald_DH_C"/>
</dbReference>
<dbReference type="InterPro" id="IPR016162">
    <property type="entry name" value="Ald_DH_N"/>
</dbReference>
<dbReference type="InterPro" id="IPR015590">
    <property type="entry name" value="Aldehyde_DH_dom"/>
</dbReference>
<dbReference type="InterPro" id="IPR020593">
    <property type="entry name" value="G-glutamylP_reductase_CS"/>
</dbReference>
<dbReference type="InterPro" id="IPR012134">
    <property type="entry name" value="Glu-5-SA_DH"/>
</dbReference>
<dbReference type="InterPro" id="IPR000965">
    <property type="entry name" value="GPR_dom"/>
</dbReference>
<dbReference type="NCBIfam" id="NF001221">
    <property type="entry name" value="PRK00197.1"/>
    <property type="match status" value="1"/>
</dbReference>
<dbReference type="NCBIfam" id="TIGR00407">
    <property type="entry name" value="proA"/>
    <property type="match status" value="1"/>
</dbReference>
<dbReference type="PANTHER" id="PTHR11063:SF8">
    <property type="entry name" value="DELTA-1-PYRROLINE-5-CARBOXYLATE SYNTHASE"/>
    <property type="match status" value="1"/>
</dbReference>
<dbReference type="PANTHER" id="PTHR11063">
    <property type="entry name" value="GLUTAMATE SEMIALDEHYDE DEHYDROGENASE"/>
    <property type="match status" value="1"/>
</dbReference>
<dbReference type="Pfam" id="PF00171">
    <property type="entry name" value="Aldedh"/>
    <property type="match status" value="1"/>
</dbReference>
<dbReference type="PIRSF" id="PIRSF000151">
    <property type="entry name" value="GPR"/>
    <property type="match status" value="1"/>
</dbReference>
<dbReference type="SUPFAM" id="SSF53720">
    <property type="entry name" value="ALDH-like"/>
    <property type="match status" value="1"/>
</dbReference>
<dbReference type="PROSITE" id="PS01223">
    <property type="entry name" value="PROA"/>
    <property type="match status" value="1"/>
</dbReference>
<evidence type="ECO:0000255" key="1">
    <source>
        <dbReference type="HAMAP-Rule" id="MF_00412"/>
    </source>
</evidence>
<protein>
    <recommendedName>
        <fullName evidence="1">Gamma-glutamyl phosphate reductase</fullName>
        <shortName evidence="1">GPR</shortName>
        <ecNumber evidence="1">1.2.1.41</ecNumber>
    </recommendedName>
    <alternativeName>
        <fullName evidence="1">Glutamate-5-semialdehyde dehydrogenase</fullName>
    </alternativeName>
    <alternativeName>
        <fullName evidence="1">Glutamyl-gamma-semialdehyde dehydrogenase</fullName>
        <shortName evidence="1">GSA dehydrogenase</shortName>
    </alternativeName>
</protein>